<keyword id="KW-0328">Glycosyltransferase</keyword>
<keyword id="KW-0479">Metal-binding</keyword>
<keyword id="KW-0671">Queuosine biosynthesis</keyword>
<keyword id="KW-1185">Reference proteome</keyword>
<keyword id="KW-0808">Transferase</keyword>
<keyword id="KW-0819">tRNA processing</keyword>
<keyword id="KW-0862">Zinc</keyword>
<evidence type="ECO:0000255" key="1">
    <source>
        <dbReference type="HAMAP-Rule" id="MF_00168"/>
    </source>
</evidence>
<protein>
    <recommendedName>
        <fullName evidence="1">Queuine tRNA-ribosyltransferase</fullName>
        <ecNumber evidence="1">2.4.2.29</ecNumber>
    </recommendedName>
    <alternativeName>
        <fullName evidence="1">Guanine insertion enzyme</fullName>
    </alternativeName>
    <alternativeName>
        <fullName evidence="1">tRNA-guanine transglycosylase</fullName>
    </alternativeName>
</protein>
<proteinExistence type="inferred from homology"/>
<feature type="chain" id="PRO_0000135496" description="Queuine tRNA-ribosyltransferase">
    <location>
        <begin position="1"/>
        <end position="371"/>
    </location>
</feature>
<feature type="region of interest" description="RNA binding" evidence="1">
    <location>
        <begin position="246"/>
        <end position="252"/>
    </location>
</feature>
<feature type="region of interest" description="RNA binding; important for wobble base 34 recognition" evidence="1">
    <location>
        <begin position="270"/>
        <end position="274"/>
    </location>
</feature>
<feature type="active site" description="Proton acceptor" evidence="1">
    <location>
        <position position="90"/>
    </location>
</feature>
<feature type="active site" description="Nucleophile" evidence="1">
    <location>
        <position position="265"/>
    </location>
</feature>
<feature type="binding site" evidence="1">
    <location>
        <begin position="90"/>
        <end position="94"/>
    </location>
    <ligand>
        <name>substrate</name>
    </ligand>
</feature>
<feature type="binding site" evidence="1">
    <location>
        <position position="144"/>
    </location>
    <ligand>
        <name>substrate</name>
    </ligand>
</feature>
<feature type="binding site" evidence="1">
    <location>
        <position position="188"/>
    </location>
    <ligand>
        <name>substrate</name>
    </ligand>
</feature>
<feature type="binding site" evidence="1">
    <location>
        <position position="215"/>
    </location>
    <ligand>
        <name>substrate</name>
    </ligand>
</feature>
<feature type="binding site" evidence="1">
    <location>
        <position position="303"/>
    </location>
    <ligand>
        <name>Zn(2+)</name>
        <dbReference type="ChEBI" id="CHEBI:29105"/>
    </ligand>
</feature>
<feature type="binding site" evidence="1">
    <location>
        <position position="305"/>
    </location>
    <ligand>
        <name>Zn(2+)</name>
        <dbReference type="ChEBI" id="CHEBI:29105"/>
    </ligand>
</feature>
<feature type="binding site" evidence="1">
    <location>
        <position position="308"/>
    </location>
    <ligand>
        <name>Zn(2+)</name>
        <dbReference type="ChEBI" id="CHEBI:29105"/>
    </ligand>
</feature>
<feature type="binding site" evidence="1">
    <location>
        <position position="334"/>
    </location>
    <ligand>
        <name>Zn(2+)</name>
        <dbReference type="ChEBI" id="CHEBI:29105"/>
    </ligand>
</feature>
<organism>
    <name type="scientific">Neisseria meningitidis serogroup B (strain ATCC BAA-335 / MC58)</name>
    <dbReference type="NCBI Taxonomy" id="122586"/>
    <lineage>
        <taxon>Bacteria</taxon>
        <taxon>Pseudomonadati</taxon>
        <taxon>Pseudomonadota</taxon>
        <taxon>Betaproteobacteria</taxon>
        <taxon>Neisseriales</taxon>
        <taxon>Neisseriaceae</taxon>
        <taxon>Neisseria</taxon>
    </lineage>
</organism>
<name>TGT_NEIMB</name>
<comment type="function">
    <text evidence="1">Catalyzes the base-exchange of a guanine (G) residue with the queuine precursor 7-aminomethyl-7-deazaguanine (PreQ1) at position 34 (anticodon wobble position) in tRNAs with GU(N) anticodons (tRNA-Asp, -Asn, -His and -Tyr). Catalysis occurs through a double-displacement mechanism. The nucleophile active site attacks the C1' of nucleotide 34 to detach the guanine base from the RNA, forming a covalent enzyme-RNA intermediate. The proton acceptor active site deprotonates the incoming PreQ1, allowing a nucleophilic attack on the C1' of the ribose to form the product. After dissociation, two additional enzymatic reactions on the tRNA convert PreQ1 to queuine (Q), resulting in the hypermodified nucleoside queuosine (7-(((4,5-cis-dihydroxy-2-cyclopenten-1-yl)amino)methyl)-7-deazaguanosine).</text>
</comment>
<comment type="catalytic activity">
    <reaction evidence="1">
        <text>7-aminomethyl-7-carbaguanine + guanosine(34) in tRNA = 7-aminomethyl-7-carbaguanosine(34) in tRNA + guanine</text>
        <dbReference type="Rhea" id="RHEA:24104"/>
        <dbReference type="Rhea" id="RHEA-COMP:10341"/>
        <dbReference type="Rhea" id="RHEA-COMP:10342"/>
        <dbReference type="ChEBI" id="CHEBI:16235"/>
        <dbReference type="ChEBI" id="CHEBI:58703"/>
        <dbReference type="ChEBI" id="CHEBI:74269"/>
        <dbReference type="ChEBI" id="CHEBI:82833"/>
        <dbReference type="EC" id="2.4.2.29"/>
    </reaction>
</comment>
<comment type="cofactor">
    <cofactor evidence="1">
        <name>Zn(2+)</name>
        <dbReference type="ChEBI" id="CHEBI:29105"/>
    </cofactor>
    <text evidence="1">Binds 1 zinc ion per subunit.</text>
</comment>
<comment type="pathway">
    <text evidence="1">tRNA modification; tRNA-queuosine biosynthesis.</text>
</comment>
<comment type="subunit">
    <text evidence="1">Homodimer. Within each dimer, one monomer is responsible for RNA recognition and catalysis, while the other monomer binds to the replacement base PreQ1.</text>
</comment>
<comment type="similarity">
    <text evidence="1">Belongs to the queuine tRNA-ribosyltransferase family.</text>
</comment>
<reference key="1">
    <citation type="journal article" date="2000" name="Science">
        <title>Complete genome sequence of Neisseria meningitidis serogroup B strain MC58.</title>
        <authorList>
            <person name="Tettelin H."/>
            <person name="Saunders N.J."/>
            <person name="Heidelberg J.F."/>
            <person name="Jeffries A.C."/>
            <person name="Nelson K.E."/>
            <person name="Eisen J.A."/>
            <person name="Ketchum K.A."/>
            <person name="Hood D.W."/>
            <person name="Peden J.F."/>
            <person name="Dodson R.J."/>
            <person name="Nelson W.C."/>
            <person name="Gwinn M.L."/>
            <person name="DeBoy R.T."/>
            <person name="Peterson J.D."/>
            <person name="Hickey E.K."/>
            <person name="Haft D.H."/>
            <person name="Salzberg S.L."/>
            <person name="White O."/>
            <person name="Fleischmann R.D."/>
            <person name="Dougherty B.A."/>
            <person name="Mason T.M."/>
            <person name="Ciecko A."/>
            <person name="Parksey D.S."/>
            <person name="Blair E."/>
            <person name="Cittone H."/>
            <person name="Clark E.B."/>
            <person name="Cotton M.D."/>
            <person name="Utterback T.R."/>
            <person name="Khouri H.M."/>
            <person name="Qin H."/>
            <person name="Vamathevan J.J."/>
            <person name="Gill J."/>
            <person name="Scarlato V."/>
            <person name="Masignani V."/>
            <person name="Pizza M."/>
            <person name="Grandi G."/>
            <person name="Sun L."/>
            <person name="Smith H.O."/>
            <person name="Fraser C.M."/>
            <person name="Moxon E.R."/>
            <person name="Rappuoli R."/>
            <person name="Venter J.C."/>
        </authorList>
    </citation>
    <scope>NUCLEOTIDE SEQUENCE [LARGE SCALE GENOMIC DNA]</scope>
    <source>
        <strain>ATCC BAA-335 / MC58</strain>
    </source>
</reference>
<gene>
    <name evidence="1" type="primary">tgt</name>
    <name type="ordered locus">NMB0719</name>
</gene>
<sequence length="371" mass="41945">MLKFTLHKKDGLARRGTLELNHGKIETPVFMPVGTYGSVKAMNPQNLHDIKAQIILGNTYHLWLRPGLEVIGQFGGLHGFIGWDKPILTDSGGFQVFSLSDMRKLTEEGCTFKSPINGDKLFLSPEISMKIQTVLNSDIAMQLDECTPGEATREQARKSLQMSLRWAERSKKAFEDLKNPNALFGIVQGAMYEDLREESLRGLEQFDFPGLAVGGLSVGEPKPEMYRMLRAVGPILPEHKPHYLMGVGTPEDLVYGVAHGIDMFDCVMPTRNARNGWLFTRFGDLKIKNAKHKLDKRPIDESCTCYACQNFSRAYLHHLHRTGEILGAQLNTIHNLHFYQVIMAEMREAVEQGKFADWQARFHENRARGTD</sequence>
<dbReference type="EC" id="2.4.2.29" evidence="1"/>
<dbReference type="EMBL" id="AE002098">
    <property type="protein sequence ID" value="AAF41132.1"/>
    <property type="molecule type" value="Genomic_DNA"/>
</dbReference>
<dbReference type="PIR" id="D81167">
    <property type="entry name" value="D81167"/>
</dbReference>
<dbReference type="RefSeq" id="NP_273761.1">
    <property type="nucleotide sequence ID" value="NC_003112.2"/>
</dbReference>
<dbReference type="RefSeq" id="WP_002225464.1">
    <property type="nucleotide sequence ID" value="NC_003112.2"/>
</dbReference>
<dbReference type="SMR" id="Q9K096"/>
<dbReference type="FunCoup" id="Q9K096">
    <property type="interactions" value="513"/>
</dbReference>
<dbReference type="STRING" id="122586.NMB0719"/>
<dbReference type="PaxDb" id="122586-NMB0719"/>
<dbReference type="KEGG" id="nme:NMB0719"/>
<dbReference type="PATRIC" id="fig|122586.8.peg.917"/>
<dbReference type="HOGENOM" id="CLU_022060_0_1_4"/>
<dbReference type="InParanoid" id="Q9K096"/>
<dbReference type="OrthoDB" id="9805417at2"/>
<dbReference type="UniPathway" id="UPA00392"/>
<dbReference type="Proteomes" id="UP000000425">
    <property type="component" value="Chromosome"/>
</dbReference>
<dbReference type="GO" id="GO:0046872">
    <property type="term" value="F:metal ion binding"/>
    <property type="evidence" value="ECO:0007669"/>
    <property type="project" value="UniProtKB-KW"/>
</dbReference>
<dbReference type="GO" id="GO:0008479">
    <property type="term" value="F:tRNA-guanosine(34) queuine transglycosylase activity"/>
    <property type="evidence" value="ECO:0000318"/>
    <property type="project" value="GO_Central"/>
</dbReference>
<dbReference type="GO" id="GO:0008616">
    <property type="term" value="P:queuosine biosynthetic process"/>
    <property type="evidence" value="ECO:0007669"/>
    <property type="project" value="UniProtKB-UniRule"/>
</dbReference>
<dbReference type="GO" id="GO:0101030">
    <property type="term" value="P:tRNA-guanine transglycosylation"/>
    <property type="evidence" value="ECO:0000318"/>
    <property type="project" value="GO_Central"/>
</dbReference>
<dbReference type="FunFam" id="3.20.20.105:FF:000001">
    <property type="entry name" value="Queuine tRNA-ribosyltransferase"/>
    <property type="match status" value="1"/>
</dbReference>
<dbReference type="Gene3D" id="3.20.20.105">
    <property type="entry name" value="Queuine tRNA-ribosyltransferase-like"/>
    <property type="match status" value="1"/>
</dbReference>
<dbReference type="HAMAP" id="MF_00168">
    <property type="entry name" value="Q_tRNA_Tgt"/>
    <property type="match status" value="1"/>
</dbReference>
<dbReference type="InterPro" id="IPR050076">
    <property type="entry name" value="ArchSynthase1/Queuine_TRR"/>
</dbReference>
<dbReference type="InterPro" id="IPR004803">
    <property type="entry name" value="TGT"/>
</dbReference>
<dbReference type="InterPro" id="IPR036511">
    <property type="entry name" value="TGT-like_sf"/>
</dbReference>
<dbReference type="InterPro" id="IPR002616">
    <property type="entry name" value="tRNA_ribo_trans-like"/>
</dbReference>
<dbReference type="NCBIfam" id="TIGR00430">
    <property type="entry name" value="Q_tRNA_tgt"/>
    <property type="match status" value="1"/>
</dbReference>
<dbReference type="NCBIfam" id="TIGR00449">
    <property type="entry name" value="tgt_general"/>
    <property type="match status" value="1"/>
</dbReference>
<dbReference type="PANTHER" id="PTHR46499">
    <property type="entry name" value="QUEUINE TRNA-RIBOSYLTRANSFERASE"/>
    <property type="match status" value="1"/>
</dbReference>
<dbReference type="PANTHER" id="PTHR46499:SF1">
    <property type="entry name" value="QUEUINE TRNA-RIBOSYLTRANSFERASE"/>
    <property type="match status" value="1"/>
</dbReference>
<dbReference type="Pfam" id="PF01702">
    <property type="entry name" value="TGT"/>
    <property type="match status" value="1"/>
</dbReference>
<dbReference type="SUPFAM" id="SSF51713">
    <property type="entry name" value="tRNA-guanine transglycosylase"/>
    <property type="match status" value="1"/>
</dbReference>
<accession>Q9K096</accession>